<name>PSAI_ORYSA</name>
<organism>
    <name type="scientific">Oryza sativa</name>
    <name type="common">Rice</name>
    <dbReference type="NCBI Taxonomy" id="4530"/>
    <lineage>
        <taxon>Eukaryota</taxon>
        <taxon>Viridiplantae</taxon>
        <taxon>Streptophyta</taxon>
        <taxon>Embryophyta</taxon>
        <taxon>Tracheophyta</taxon>
        <taxon>Spermatophyta</taxon>
        <taxon>Magnoliopsida</taxon>
        <taxon>Liliopsida</taxon>
        <taxon>Poales</taxon>
        <taxon>Poaceae</taxon>
        <taxon>BOP clade</taxon>
        <taxon>Oryzoideae</taxon>
        <taxon>Oryzeae</taxon>
        <taxon>Oryzinae</taxon>
        <taxon>Oryza</taxon>
    </lineage>
</organism>
<protein>
    <recommendedName>
        <fullName>Photosystem I reaction center subunit VIII</fullName>
        <shortName>PSI-I</shortName>
    </recommendedName>
</protein>
<dbReference type="EMBL" id="AY522331">
    <property type="status" value="NOT_ANNOTATED_CDS"/>
    <property type="molecule type" value="Genomic_DNA"/>
</dbReference>
<dbReference type="RefSeq" id="YP_009305314.1">
    <property type="nucleotide sequence ID" value="NC_031333.1"/>
</dbReference>
<dbReference type="SMR" id="P0C371"/>
<dbReference type="GeneID" id="29141380"/>
<dbReference type="GO" id="GO:0009535">
    <property type="term" value="C:chloroplast thylakoid membrane"/>
    <property type="evidence" value="ECO:0007669"/>
    <property type="project" value="UniProtKB-SubCell"/>
</dbReference>
<dbReference type="GO" id="GO:0009522">
    <property type="term" value="C:photosystem I"/>
    <property type="evidence" value="ECO:0007669"/>
    <property type="project" value="UniProtKB-KW"/>
</dbReference>
<dbReference type="GO" id="GO:0009536">
    <property type="term" value="C:plastid"/>
    <property type="evidence" value="ECO:0000305"/>
    <property type="project" value="Gramene"/>
</dbReference>
<dbReference type="GO" id="GO:0015979">
    <property type="term" value="P:photosynthesis"/>
    <property type="evidence" value="ECO:0007669"/>
    <property type="project" value="UniProtKB-UniRule"/>
</dbReference>
<dbReference type="HAMAP" id="MF_00431">
    <property type="entry name" value="PSI_PsaI"/>
    <property type="match status" value="1"/>
</dbReference>
<dbReference type="InterPro" id="IPR001302">
    <property type="entry name" value="PSI_PsaI"/>
</dbReference>
<dbReference type="InterPro" id="IPR036357">
    <property type="entry name" value="PSI_PsaI_sf"/>
</dbReference>
<dbReference type="NCBIfam" id="TIGR03052">
    <property type="entry name" value="PS_I_psaI"/>
    <property type="match status" value="1"/>
</dbReference>
<dbReference type="PANTHER" id="PTHR35775">
    <property type="match status" value="1"/>
</dbReference>
<dbReference type="PANTHER" id="PTHR35775:SF2">
    <property type="entry name" value="PHOTOSYSTEM I REACTION CENTER SUBUNIT VIII"/>
    <property type="match status" value="1"/>
</dbReference>
<dbReference type="Pfam" id="PF00796">
    <property type="entry name" value="PSI_8"/>
    <property type="match status" value="1"/>
</dbReference>
<dbReference type="SUPFAM" id="SSF81540">
    <property type="entry name" value="Subunit VIII of photosystem I reaction centre, PsaI"/>
    <property type="match status" value="1"/>
</dbReference>
<keyword id="KW-0150">Chloroplast</keyword>
<keyword id="KW-0472">Membrane</keyword>
<keyword id="KW-0602">Photosynthesis</keyword>
<keyword id="KW-0603">Photosystem I</keyword>
<keyword id="KW-0934">Plastid</keyword>
<keyword id="KW-0793">Thylakoid</keyword>
<keyword id="KW-0812">Transmembrane</keyword>
<keyword id="KW-1133">Transmembrane helix</keyword>
<sequence>MMDFNLPSIFVPLVGLVFPAIAMASLFLYVQKNKIV</sequence>
<accession>P0C371</accession>
<feature type="chain" id="PRO_0000288988" description="Photosystem I reaction center subunit VIII">
    <location>
        <begin position="1"/>
        <end position="36"/>
    </location>
</feature>
<feature type="transmembrane region" description="Helical" evidence="2">
    <location>
        <begin position="10"/>
        <end position="30"/>
    </location>
</feature>
<evidence type="ECO:0000250" key="1"/>
<evidence type="ECO:0000255" key="2"/>
<evidence type="ECO:0000305" key="3"/>
<gene>
    <name type="primary">psaI</name>
</gene>
<reference key="1">
    <citation type="journal article" date="2004" name="Plant Physiol.">
        <title>A comparison of rice chloroplast genomes.</title>
        <authorList>
            <person name="Tang J."/>
            <person name="Xia H."/>
            <person name="Cao M."/>
            <person name="Zhang X."/>
            <person name="Zeng W."/>
            <person name="Hu S."/>
            <person name="Tong W."/>
            <person name="Wang J."/>
            <person name="Wang J."/>
            <person name="Yu J."/>
            <person name="Yang H."/>
            <person name="Zhu L."/>
        </authorList>
    </citation>
    <scope>NUCLEOTIDE SEQUENCE [LARGE SCALE GENOMIC DNA]</scope>
    <source>
        <strain>cv. PA64s</strain>
    </source>
</reference>
<geneLocation type="chloroplast"/>
<comment type="function">
    <text evidence="1">May help in the organization of the PsaL subunit.</text>
</comment>
<comment type="subcellular location">
    <subcellularLocation>
        <location evidence="1">Plastid</location>
        <location evidence="1">Chloroplast thylakoid membrane</location>
        <topology evidence="1">Single-pass membrane protein</topology>
    </subcellularLocation>
</comment>
<comment type="similarity">
    <text evidence="3">Belongs to the PsaI family.</text>
</comment>
<proteinExistence type="inferred from homology"/>